<evidence type="ECO:0000255" key="1">
    <source>
        <dbReference type="HAMAP-Rule" id="MF_00045"/>
    </source>
</evidence>
<protein>
    <recommendedName>
        <fullName evidence="1">Oligoribonuclease</fullName>
        <ecNumber evidence="1">3.1.15.-</ecNumber>
    </recommendedName>
</protein>
<gene>
    <name evidence="1" type="primary">orn</name>
    <name type="synonym">ornA</name>
</gene>
<keyword id="KW-0963">Cytoplasm</keyword>
<keyword id="KW-0269">Exonuclease</keyword>
<keyword id="KW-0378">Hydrolase</keyword>
<keyword id="KW-0540">Nuclease</keyword>
<comment type="function">
    <text>3'-to-5' exoribonuclease specific for small oligoribonucleotides.</text>
</comment>
<comment type="subcellular location">
    <subcellularLocation>
        <location evidence="1">Cytoplasm</location>
    </subcellularLocation>
</comment>
<comment type="similarity">
    <text evidence="1">Belongs to the oligoribonuclease family.</text>
</comment>
<sequence>MNDRMVWIDCEMTGLSLADDALIEVAALVTDSELNVLGEGVDIVIRPPDAALETMPEVVRQMHTASGLLDELAGGTTLADAEEQVLAYVREHVKEPGKAPLCGNSVGTDRGFLARDMRELEGYLHYRIVDVSSVKELARRWYPRAYFNSPAKNGNHRALADIRDSITELRYYREAVFVPQPGPDSERAKEIAARLSAPAAP</sequence>
<accession>P57667</accession>
<accession>Q9S165</accession>
<feature type="chain" id="PRO_0000111074" description="Oligoribonuclease">
    <location>
        <begin position="1"/>
        <end position="201"/>
    </location>
</feature>
<feature type="domain" description="Exonuclease" evidence="1">
    <location>
        <begin position="5"/>
        <end position="169"/>
    </location>
</feature>
<feature type="active site" evidence="1">
    <location>
        <position position="126"/>
    </location>
</feature>
<name>ORN_STRGR</name>
<proteinExistence type="evidence at protein level"/>
<reference key="1">
    <citation type="journal article" date="1999" name="Mol. Microbiol.">
        <title>The A-factor regulatory cascade leading to streptomycin biosynthesis in Streptomyces griseus: identification of a target gene of the A-factor receptor.</title>
        <authorList>
            <person name="Ohnishi Y."/>
            <person name="Kameyama S."/>
            <person name="Onaka H."/>
            <person name="Horinouchi S."/>
        </authorList>
    </citation>
    <scope>NUCLEOTIDE SEQUENCE [GENOMIC DNA]</scope>
    <source>
        <strain>IFO 13350 / CBS 651.72</strain>
    </source>
</reference>
<reference key="2">
    <citation type="journal article" date="2000" name="J. Bacteriol.">
        <title>An oligoribonuclease gene in Streptomyces griseus.</title>
        <authorList>
            <person name="Ohnishi Y."/>
            <person name="Nishiyama Y."/>
            <person name="Sato R."/>
            <person name="Kameyama S."/>
            <person name="Horinouchi S."/>
        </authorList>
    </citation>
    <scope>NUCLEOTIDE SEQUENCE [GENOMIC DNA]</scope>
    <scope>CHARACTERIZATION</scope>
    <source>
        <strain>IFO 13350 / CBS 651.72</strain>
    </source>
</reference>
<dbReference type="EC" id="3.1.15.-" evidence="1"/>
<dbReference type="EMBL" id="AB023785">
    <property type="protein sequence ID" value="BAA86266.1"/>
    <property type="molecule type" value="Genomic_DNA"/>
</dbReference>
<dbReference type="PIR" id="T44489">
    <property type="entry name" value="T44489"/>
</dbReference>
<dbReference type="RefSeq" id="WP_003968986.1">
    <property type="nucleotide sequence ID" value="NZ_UAVD01000025.1"/>
</dbReference>
<dbReference type="SMR" id="P57667"/>
<dbReference type="STRING" id="1911.GCA_001715295_04187"/>
<dbReference type="OMA" id="AFFHYRN"/>
<dbReference type="OrthoDB" id="9801329at2"/>
<dbReference type="GO" id="GO:0005737">
    <property type="term" value="C:cytoplasm"/>
    <property type="evidence" value="ECO:0007669"/>
    <property type="project" value="UniProtKB-SubCell"/>
</dbReference>
<dbReference type="GO" id="GO:0000175">
    <property type="term" value="F:3'-5'-RNA exonuclease activity"/>
    <property type="evidence" value="ECO:0007669"/>
    <property type="project" value="InterPro"/>
</dbReference>
<dbReference type="GO" id="GO:0003676">
    <property type="term" value="F:nucleic acid binding"/>
    <property type="evidence" value="ECO:0007669"/>
    <property type="project" value="InterPro"/>
</dbReference>
<dbReference type="CDD" id="cd06135">
    <property type="entry name" value="Orn"/>
    <property type="match status" value="1"/>
</dbReference>
<dbReference type="FunFam" id="3.30.420.10:FF:000003">
    <property type="entry name" value="Oligoribonuclease"/>
    <property type="match status" value="1"/>
</dbReference>
<dbReference type="Gene3D" id="3.30.420.10">
    <property type="entry name" value="Ribonuclease H-like superfamily/Ribonuclease H"/>
    <property type="match status" value="1"/>
</dbReference>
<dbReference type="HAMAP" id="MF_00045">
    <property type="entry name" value="Oligoribonuclease"/>
    <property type="match status" value="1"/>
</dbReference>
<dbReference type="InterPro" id="IPR013520">
    <property type="entry name" value="Exonuclease_RNaseT/DNA_pol3"/>
</dbReference>
<dbReference type="InterPro" id="IPR022894">
    <property type="entry name" value="Oligoribonuclease"/>
</dbReference>
<dbReference type="InterPro" id="IPR012337">
    <property type="entry name" value="RNaseH-like_sf"/>
</dbReference>
<dbReference type="InterPro" id="IPR036397">
    <property type="entry name" value="RNaseH_sf"/>
</dbReference>
<dbReference type="NCBIfam" id="NF003765">
    <property type="entry name" value="PRK05359.1"/>
    <property type="match status" value="1"/>
</dbReference>
<dbReference type="PANTHER" id="PTHR11046">
    <property type="entry name" value="OLIGORIBONUCLEASE, MITOCHONDRIAL"/>
    <property type="match status" value="1"/>
</dbReference>
<dbReference type="PANTHER" id="PTHR11046:SF0">
    <property type="entry name" value="OLIGORIBONUCLEASE, MITOCHONDRIAL"/>
    <property type="match status" value="1"/>
</dbReference>
<dbReference type="Pfam" id="PF00929">
    <property type="entry name" value="RNase_T"/>
    <property type="match status" value="1"/>
</dbReference>
<dbReference type="SMART" id="SM00479">
    <property type="entry name" value="EXOIII"/>
    <property type="match status" value="1"/>
</dbReference>
<dbReference type="SUPFAM" id="SSF53098">
    <property type="entry name" value="Ribonuclease H-like"/>
    <property type="match status" value="1"/>
</dbReference>
<organism>
    <name type="scientific">Streptomyces griseus</name>
    <dbReference type="NCBI Taxonomy" id="1911"/>
    <lineage>
        <taxon>Bacteria</taxon>
        <taxon>Bacillati</taxon>
        <taxon>Actinomycetota</taxon>
        <taxon>Actinomycetes</taxon>
        <taxon>Kitasatosporales</taxon>
        <taxon>Streptomycetaceae</taxon>
        <taxon>Streptomyces</taxon>
    </lineage>
</organism>